<organism>
    <name type="scientific">Escherichia coli O157:H7</name>
    <dbReference type="NCBI Taxonomy" id="83334"/>
    <lineage>
        <taxon>Bacteria</taxon>
        <taxon>Pseudomonadati</taxon>
        <taxon>Pseudomonadota</taxon>
        <taxon>Gammaproteobacteria</taxon>
        <taxon>Enterobacterales</taxon>
        <taxon>Enterobacteriaceae</taxon>
        <taxon>Escherichia</taxon>
    </lineage>
</organism>
<comment type="function">
    <text evidence="1">Binds to and stimulates the transcription of the CCAAT-containing, cold-shock-inducible promoters of the H-NS and GyrA proteins. Also binds to the inverted repeat 5'-ATTGG-3' (By similarity).</text>
</comment>
<comment type="subcellular location">
    <subcellularLocation>
        <location evidence="1">Cytoplasm</location>
    </subcellularLocation>
</comment>
<comment type="induction">
    <text evidence="1">In response to low temperature.</text>
</comment>
<keyword id="KW-0010">Activator</keyword>
<keyword id="KW-0963">Cytoplasm</keyword>
<keyword id="KW-0238">DNA-binding</keyword>
<keyword id="KW-1185">Reference proteome</keyword>
<keyword id="KW-0346">Stress response</keyword>
<keyword id="KW-0804">Transcription</keyword>
<keyword id="KW-0805">Transcription regulation</keyword>
<dbReference type="EMBL" id="AE005174">
    <property type="protein sequence ID" value="AAG58705.1"/>
    <property type="molecule type" value="Genomic_DNA"/>
</dbReference>
<dbReference type="EMBL" id="BA000007">
    <property type="protein sequence ID" value="BAB37864.1"/>
    <property type="molecule type" value="Genomic_DNA"/>
</dbReference>
<dbReference type="PIR" id="A91184">
    <property type="entry name" value="A91184"/>
</dbReference>
<dbReference type="PIR" id="E86030">
    <property type="entry name" value="E86030"/>
</dbReference>
<dbReference type="RefSeq" id="NP_312468.1">
    <property type="nucleotide sequence ID" value="NC_002695.1"/>
</dbReference>
<dbReference type="RefSeq" id="WP_000014594.1">
    <property type="nucleotide sequence ID" value="NZ_VOAI01000004.1"/>
</dbReference>
<dbReference type="BMRB" id="P0A9Y1"/>
<dbReference type="SMR" id="P0A9Y1"/>
<dbReference type="STRING" id="155864.Z4981"/>
<dbReference type="GeneID" id="915643"/>
<dbReference type="GeneID" id="93778287"/>
<dbReference type="KEGG" id="ece:Z4981"/>
<dbReference type="KEGG" id="ecs:ECs_4441"/>
<dbReference type="PATRIC" id="fig|386585.9.peg.4648"/>
<dbReference type="eggNOG" id="COG1278">
    <property type="taxonomic scope" value="Bacteria"/>
</dbReference>
<dbReference type="HOGENOM" id="CLU_117621_2_1_6"/>
<dbReference type="OMA" id="MDNKSQG"/>
<dbReference type="Proteomes" id="UP000000558">
    <property type="component" value="Chromosome"/>
</dbReference>
<dbReference type="Proteomes" id="UP000002519">
    <property type="component" value="Chromosome"/>
</dbReference>
<dbReference type="GO" id="GO:0005829">
    <property type="term" value="C:cytosol"/>
    <property type="evidence" value="ECO:0007669"/>
    <property type="project" value="UniProtKB-ARBA"/>
</dbReference>
<dbReference type="GO" id="GO:0003677">
    <property type="term" value="F:DNA binding"/>
    <property type="evidence" value="ECO:0007669"/>
    <property type="project" value="UniProtKB-KW"/>
</dbReference>
<dbReference type="CDD" id="cd04458">
    <property type="entry name" value="CSP_CDS"/>
    <property type="match status" value="1"/>
</dbReference>
<dbReference type="FunFam" id="2.40.50.140:FF:000006">
    <property type="entry name" value="Cold shock protein CspC"/>
    <property type="match status" value="1"/>
</dbReference>
<dbReference type="Gene3D" id="2.40.50.140">
    <property type="entry name" value="Nucleic acid-binding proteins"/>
    <property type="match status" value="1"/>
</dbReference>
<dbReference type="InterPro" id="IPR012156">
    <property type="entry name" value="Cold_shock_CspA"/>
</dbReference>
<dbReference type="InterPro" id="IPR050181">
    <property type="entry name" value="Cold_shock_domain"/>
</dbReference>
<dbReference type="InterPro" id="IPR011129">
    <property type="entry name" value="CSD"/>
</dbReference>
<dbReference type="InterPro" id="IPR019844">
    <property type="entry name" value="CSD_CS"/>
</dbReference>
<dbReference type="InterPro" id="IPR002059">
    <property type="entry name" value="CSP_DNA-bd"/>
</dbReference>
<dbReference type="InterPro" id="IPR012340">
    <property type="entry name" value="NA-bd_OB-fold"/>
</dbReference>
<dbReference type="NCBIfam" id="NF007679">
    <property type="entry name" value="PRK10354.1"/>
    <property type="match status" value="1"/>
</dbReference>
<dbReference type="PANTHER" id="PTHR11544">
    <property type="entry name" value="COLD SHOCK DOMAIN CONTAINING PROTEINS"/>
    <property type="match status" value="1"/>
</dbReference>
<dbReference type="Pfam" id="PF00313">
    <property type="entry name" value="CSD"/>
    <property type="match status" value="1"/>
</dbReference>
<dbReference type="PIRSF" id="PIRSF002599">
    <property type="entry name" value="Cold_shock_A"/>
    <property type="match status" value="1"/>
</dbReference>
<dbReference type="PRINTS" id="PR00050">
    <property type="entry name" value="COLDSHOCK"/>
</dbReference>
<dbReference type="SMART" id="SM00357">
    <property type="entry name" value="CSP"/>
    <property type="match status" value="1"/>
</dbReference>
<dbReference type="SUPFAM" id="SSF50249">
    <property type="entry name" value="Nucleic acid-binding proteins"/>
    <property type="match status" value="1"/>
</dbReference>
<dbReference type="PROSITE" id="PS00352">
    <property type="entry name" value="CSD_1"/>
    <property type="match status" value="1"/>
</dbReference>
<dbReference type="PROSITE" id="PS51857">
    <property type="entry name" value="CSD_2"/>
    <property type="match status" value="1"/>
</dbReference>
<feature type="initiator methionine" description="Removed" evidence="1">
    <location>
        <position position="1"/>
    </location>
</feature>
<feature type="chain" id="PRO_0000100235" description="Cold shock protein CspA">
    <location>
        <begin position="2"/>
        <end position="70"/>
    </location>
</feature>
<feature type="domain" description="CSD">
    <location>
        <begin position="7"/>
        <end position="67"/>
    </location>
</feature>
<accession>P0A9Y1</accession>
<accession>P15277</accession>
<accession>P37410</accession>
<accession>Q54170</accession>
<sequence>MSGKMTGIVKWFNADKGFGFITPDDGSKDVFVHFSAIQNDGYKSLDEGQKVSFTIESGAKGPAAGNVTSL</sequence>
<name>CSPA_ECO57</name>
<proteinExistence type="inferred from homology"/>
<reference key="1">
    <citation type="journal article" date="2001" name="Nature">
        <title>Genome sequence of enterohaemorrhagic Escherichia coli O157:H7.</title>
        <authorList>
            <person name="Perna N.T."/>
            <person name="Plunkett G. III"/>
            <person name="Burland V."/>
            <person name="Mau B."/>
            <person name="Glasner J.D."/>
            <person name="Rose D.J."/>
            <person name="Mayhew G.F."/>
            <person name="Evans P.S."/>
            <person name="Gregor J."/>
            <person name="Kirkpatrick H.A."/>
            <person name="Posfai G."/>
            <person name="Hackett J."/>
            <person name="Klink S."/>
            <person name="Boutin A."/>
            <person name="Shao Y."/>
            <person name="Miller L."/>
            <person name="Grotbeck E.J."/>
            <person name="Davis N.W."/>
            <person name="Lim A."/>
            <person name="Dimalanta E.T."/>
            <person name="Potamousis K."/>
            <person name="Apodaca J."/>
            <person name="Anantharaman T.S."/>
            <person name="Lin J."/>
            <person name="Yen G."/>
            <person name="Schwartz D.C."/>
            <person name="Welch R.A."/>
            <person name="Blattner F.R."/>
        </authorList>
    </citation>
    <scope>NUCLEOTIDE SEQUENCE [LARGE SCALE GENOMIC DNA]</scope>
    <source>
        <strain>O157:H7 / EDL933 / ATCC 700927 / EHEC</strain>
    </source>
</reference>
<reference key="2">
    <citation type="journal article" date="2001" name="DNA Res.">
        <title>Complete genome sequence of enterohemorrhagic Escherichia coli O157:H7 and genomic comparison with a laboratory strain K-12.</title>
        <authorList>
            <person name="Hayashi T."/>
            <person name="Makino K."/>
            <person name="Ohnishi M."/>
            <person name="Kurokawa K."/>
            <person name="Ishii K."/>
            <person name="Yokoyama K."/>
            <person name="Han C.-G."/>
            <person name="Ohtsubo E."/>
            <person name="Nakayama K."/>
            <person name="Murata T."/>
            <person name="Tanaka M."/>
            <person name="Tobe T."/>
            <person name="Iida T."/>
            <person name="Takami H."/>
            <person name="Honda T."/>
            <person name="Sasakawa C."/>
            <person name="Ogasawara N."/>
            <person name="Yasunaga T."/>
            <person name="Kuhara S."/>
            <person name="Shiba T."/>
            <person name="Hattori M."/>
            <person name="Shinagawa H."/>
        </authorList>
    </citation>
    <scope>NUCLEOTIDE SEQUENCE [LARGE SCALE GENOMIC DNA]</scope>
    <source>
        <strain>O157:H7 / Sakai / RIMD 0509952 / EHEC</strain>
    </source>
</reference>
<protein>
    <recommendedName>
        <fullName>Cold shock protein CspA</fullName>
        <shortName>CSP-A</shortName>
    </recommendedName>
    <alternativeName>
        <fullName>7.4 kDa cold shock protein</fullName>
    </alternativeName>
    <alternativeName>
        <fullName>CS7.4</fullName>
    </alternativeName>
</protein>
<evidence type="ECO:0000250" key="1"/>
<gene>
    <name type="primary">cspA</name>
    <name type="ordered locus">Z4981</name>
    <name type="ordered locus">ECs4441</name>
</gene>